<gene>
    <name evidence="1" type="primary">bioB</name>
    <name type="ordered locus">CPF_1795</name>
</gene>
<comment type="function">
    <text evidence="1">Catalyzes the conversion of dethiobiotin (DTB) to biotin by the insertion of a sulfur atom into dethiobiotin via a radical-based mechanism.</text>
</comment>
<comment type="catalytic activity">
    <reaction evidence="1">
        <text>(4R,5S)-dethiobiotin + (sulfur carrier)-SH + 2 reduced [2Fe-2S]-[ferredoxin] + 2 S-adenosyl-L-methionine = (sulfur carrier)-H + biotin + 2 5'-deoxyadenosine + 2 L-methionine + 2 oxidized [2Fe-2S]-[ferredoxin]</text>
        <dbReference type="Rhea" id="RHEA:22060"/>
        <dbReference type="Rhea" id="RHEA-COMP:10000"/>
        <dbReference type="Rhea" id="RHEA-COMP:10001"/>
        <dbReference type="Rhea" id="RHEA-COMP:14737"/>
        <dbReference type="Rhea" id="RHEA-COMP:14739"/>
        <dbReference type="ChEBI" id="CHEBI:17319"/>
        <dbReference type="ChEBI" id="CHEBI:29917"/>
        <dbReference type="ChEBI" id="CHEBI:33737"/>
        <dbReference type="ChEBI" id="CHEBI:33738"/>
        <dbReference type="ChEBI" id="CHEBI:57586"/>
        <dbReference type="ChEBI" id="CHEBI:57844"/>
        <dbReference type="ChEBI" id="CHEBI:59789"/>
        <dbReference type="ChEBI" id="CHEBI:64428"/>
        <dbReference type="ChEBI" id="CHEBI:149473"/>
        <dbReference type="EC" id="2.8.1.6"/>
    </reaction>
</comment>
<comment type="cofactor">
    <cofactor evidence="1">
        <name>[4Fe-4S] cluster</name>
        <dbReference type="ChEBI" id="CHEBI:49883"/>
    </cofactor>
    <text evidence="1">Binds 1 [4Fe-4S] cluster. The cluster is coordinated with 3 cysteines and an exchangeable S-adenosyl-L-methionine.</text>
</comment>
<comment type="cofactor">
    <cofactor evidence="1">
        <name>[2Fe-2S] cluster</name>
        <dbReference type="ChEBI" id="CHEBI:190135"/>
    </cofactor>
    <text evidence="1">Binds 1 [2Fe-2S] cluster. The cluster is coordinated with 3 cysteines and 1 arginine.</text>
</comment>
<comment type="pathway">
    <text evidence="1">Cofactor biosynthesis; biotin biosynthesis; biotin from 7,8-diaminononanoate: step 2/2.</text>
</comment>
<comment type="subunit">
    <text evidence="1">Homodimer.</text>
</comment>
<comment type="similarity">
    <text evidence="1">Belongs to the radical SAM superfamily. Biotin synthase family.</text>
</comment>
<feature type="chain" id="PRO_0000381320" description="Biotin synthase">
    <location>
        <begin position="1"/>
        <end position="319"/>
    </location>
</feature>
<feature type="domain" description="Radical SAM core" evidence="2">
    <location>
        <begin position="44"/>
        <end position="273"/>
    </location>
</feature>
<feature type="binding site" evidence="1">
    <location>
        <position position="62"/>
    </location>
    <ligand>
        <name>[4Fe-4S] cluster</name>
        <dbReference type="ChEBI" id="CHEBI:49883"/>
        <note>4Fe-4S-S-AdoMet</note>
    </ligand>
</feature>
<feature type="binding site" evidence="1">
    <location>
        <position position="66"/>
    </location>
    <ligand>
        <name>[4Fe-4S] cluster</name>
        <dbReference type="ChEBI" id="CHEBI:49883"/>
        <note>4Fe-4S-S-AdoMet</note>
    </ligand>
</feature>
<feature type="binding site" evidence="1">
    <location>
        <position position="69"/>
    </location>
    <ligand>
        <name>[4Fe-4S] cluster</name>
        <dbReference type="ChEBI" id="CHEBI:49883"/>
        <note>4Fe-4S-S-AdoMet</note>
    </ligand>
</feature>
<feature type="binding site" evidence="1">
    <location>
        <position position="106"/>
    </location>
    <ligand>
        <name>[2Fe-2S] cluster</name>
        <dbReference type="ChEBI" id="CHEBI:190135"/>
    </ligand>
</feature>
<feature type="binding site" evidence="1">
    <location>
        <position position="138"/>
    </location>
    <ligand>
        <name>[2Fe-2S] cluster</name>
        <dbReference type="ChEBI" id="CHEBI:190135"/>
    </ligand>
</feature>
<feature type="binding site" evidence="1">
    <location>
        <position position="198"/>
    </location>
    <ligand>
        <name>[2Fe-2S] cluster</name>
        <dbReference type="ChEBI" id="CHEBI:190135"/>
    </ligand>
</feature>
<feature type="binding site" evidence="1">
    <location>
        <position position="268"/>
    </location>
    <ligand>
        <name>[2Fe-2S] cluster</name>
        <dbReference type="ChEBI" id="CHEBI:190135"/>
    </ligand>
</feature>
<evidence type="ECO:0000255" key="1">
    <source>
        <dbReference type="HAMAP-Rule" id="MF_01694"/>
    </source>
</evidence>
<evidence type="ECO:0000255" key="2">
    <source>
        <dbReference type="PROSITE-ProRule" id="PRU01266"/>
    </source>
</evidence>
<dbReference type="EC" id="2.8.1.6" evidence="1"/>
<dbReference type="EMBL" id="CP000246">
    <property type="protein sequence ID" value="ABG82486.1"/>
    <property type="molecule type" value="Genomic_DNA"/>
</dbReference>
<dbReference type="RefSeq" id="WP_011590888.1">
    <property type="nucleotide sequence ID" value="NC_008261.1"/>
</dbReference>
<dbReference type="SMR" id="Q0TQ59"/>
<dbReference type="STRING" id="195103.CPF_1795"/>
<dbReference type="PaxDb" id="195103-CPF_1795"/>
<dbReference type="KEGG" id="cpf:CPF_1795"/>
<dbReference type="eggNOG" id="COG0502">
    <property type="taxonomic scope" value="Bacteria"/>
</dbReference>
<dbReference type="HOGENOM" id="CLU_033172_2_1_9"/>
<dbReference type="UniPathway" id="UPA00078">
    <property type="reaction ID" value="UER00162"/>
</dbReference>
<dbReference type="Proteomes" id="UP000001823">
    <property type="component" value="Chromosome"/>
</dbReference>
<dbReference type="GO" id="GO:0051537">
    <property type="term" value="F:2 iron, 2 sulfur cluster binding"/>
    <property type="evidence" value="ECO:0007669"/>
    <property type="project" value="UniProtKB-KW"/>
</dbReference>
<dbReference type="GO" id="GO:0051539">
    <property type="term" value="F:4 iron, 4 sulfur cluster binding"/>
    <property type="evidence" value="ECO:0007669"/>
    <property type="project" value="UniProtKB-KW"/>
</dbReference>
<dbReference type="GO" id="GO:0004076">
    <property type="term" value="F:biotin synthase activity"/>
    <property type="evidence" value="ECO:0007669"/>
    <property type="project" value="UniProtKB-UniRule"/>
</dbReference>
<dbReference type="GO" id="GO:0005506">
    <property type="term" value="F:iron ion binding"/>
    <property type="evidence" value="ECO:0007669"/>
    <property type="project" value="UniProtKB-UniRule"/>
</dbReference>
<dbReference type="GO" id="GO:0009102">
    <property type="term" value="P:biotin biosynthetic process"/>
    <property type="evidence" value="ECO:0007669"/>
    <property type="project" value="UniProtKB-UniRule"/>
</dbReference>
<dbReference type="CDD" id="cd01335">
    <property type="entry name" value="Radical_SAM"/>
    <property type="match status" value="1"/>
</dbReference>
<dbReference type="FunFam" id="3.20.20.70:FF:000026">
    <property type="entry name" value="Biotin synthase"/>
    <property type="match status" value="1"/>
</dbReference>
<dbReference type="Gene3D" id="3.20.20.70">
    <property type="entry name" value="Aldolase class I"/>
    <property type="match status" value="1"/>
</dbReference>
<dbReference type="HAMAP" id="MF_01694">
    <property type="entry name" value="BioB"/>
    <property type="match status" value="1"/>
</dbReference>
<dbReference type="InterPro" id="IPR013785">
    <property type="entry name" value="Aldolase_TIM"/>
</dbReference>
<dbReference type="InterPro" id="IPR010722">
    <property type="entry name" value="BATS_dom"/>
</dbReference>
<dbReference type="InterPro" id="IPR002684">
    <property type="entry name" value="Biotin_synth/BioAB"/>
</dbReference>
<dbReference type="InterPro" id="IPR024177">
    <property type="entry name" value="Biotin_synthase"/>
</dbReference>
<dbReference type="InterPro" id="IPR006638">
    <property type="entry name" value="Elp3/MiaA/NifB-like_rSAM"/>
</dbReference>
<dbReference type="InterPro" id="IPR007197">
    <property type="entry name" value="rSAM"/>
</dbReference>
<dbReference type="NCBIfam" id="TIGR00433">
    <property type="entry name" value="bioB"/>
    <property type="match status" value="1"/>
</dbReference>
<dbReference type="PANTHER" id="PTHR22976">
    <property type="entry name" value="BIOTIN SYNTHASE"/>
    <property type="match status" value="1"/>
</dbReference>
<dbReference type="PANTHER" id="PTHR22976:SF2">
    <property type="entry name" value="BIOTIN SYNTHASE, MITOCHONDRIAL"/>
    <property type="match status" value="1"/>
</dbReference>
<dbReference type="Pfam" id="PF06968">
    <property type="entry name" value="BATS"/>
    <property type="match status" value="1"/>
</dbReference>
<dbReference type="Pfam" id="PF04055">
    <property type="entry name" value="Radical_SAM"/>
    <property type="match status" value="1"/>
</dbReference>
<dbReference type="PIRSF" id="PIRSF001619">
    <property type="entry name" value="Biotin_synth"/>
    <property type="match status" value="1"/>
</dbReference>
<dbReference type="SFLD" id="SFLDG01060">
    <property type="entry name" value="BATS_domain_containing"/>
    <property type="match status" value="1"/>
</dbReference>
<dbReference type="SFLD" id="SFLDG01278">
    <property type="entry name" value="biotin_synthase_like"/>
    <property type="match status" value="1"/>
</dbReference>
<dbReference type="SMART" id="SM00876">
    <property type="entry name" value="BATS"/>
    <property type="match status" value="1"/>
</dbReference>
<dbReference type="SMART" id="SM00729">
    <property type="entry name" value="Elp3"/>
    <property type="match status" value="1"/>
</dbReference>
<dbReference type="SUPFAM" id="SSF102114">
    <property type="entry name" value="Radical SAM enzymes"/>
    <property type="match status" value="1"/>
</dbReference>
<dbReference type="PROSITE" id="PS51918">
    <property type="entry name" value="RADICAL_SAM"/>
    <property type="match status" value="1"/>
</dbReference>
<proteinExistence type="inferred from homology"/>
<name>BIOB_CLOP1</name>
<keyword id="KW-0001">2Fe-2S</keyword>
<keyword id="KW-0004">4Fe-4S</keyword>
<keyword id="KW-0093">Biotin biosynthesis</keyword>
<keyword id="KW-0408">Iron</keyword>
<keyword id="KW-0411">Iron-sulfur</keyword>
<keyword id="KW-0479">Metal-binding</keyword>
<keyword id="KW-0949">S-adenosyl-L-methionine</keyword>
<keyword id="KW-0808">Transferase</keyword>
<organism>
    <name type="scientific">Clostridium perfringens (strain ATCC 13124 / DSM 756 / JCM 1290 / NCIMB 6125 / NCTC 8237 / Type A)</name>
    <dbReference type="NCBI Taxonomy" id="195103"/>
    <lineage>
        <taxon>Bacteria</taxon>
        <taxon>Bacillati</taxon>
        <taxon>Bacillota</taxon>
        <taxon>Clostridia</taxon>
        <taxon>Eubacteriales</taxon>
        <taxon>Clostridiaceae</taxon>
        <taxon>Clostridium</taxon>
    </lineage>
</organism>
<sequence length="319" mass="36123">MDFVLKMKDKSLKNRKLTREEGLRLFNSNLEELIKEANNIRKEIHGDGIDLCSIINGKSGRCGEDCAFCAQSKYHKTNISEYPLLDYEKIKKVAKENEDEGVHRFSIVTSGRGLYGEEFERVITYYSNLNKELKINLCASHGIINKESLIKLKKAGVKRYHHNLETSRNCYDKICKTHSYEERVKTIKNAKEAGLEVCSGGIIGLGETIIDRIDLAITLRELEIKSIPINVLSAIKGTKLQHMIPLNEEEILRTIAVFRFINPEAKIRLAGGRYLLKNFGENAFKAGANATITGNLLTTCGNKIKDDKRLIENIGMRIF</sequence>
<accession>Q0TQ59</accession>
<protein>
    <recommendedName>
        <fullName evidence="1">Biotin synthase</fullName>
        <ecNumber evidence="1">2.8.1.6</ecNumber>
    </recommendedName>
</protein>
<reference key="1">
    <citation type="journal article" date="2006" name="Genome Res.">
        <title>Skewed genomic variability in strains of the toxigenic bacterial pathogen, Clostridium perfringens.</title>
        <authorList>
            <person name="Myers G.S.A."/>
            <person name="Rasko D.A."/>
            <person name="Cheung J.K."/>
            <person name="Ravel J."/>
            <person name="Seshadri R."/>
            <person name="DeBoy R.T."/>
            <person name="Ren Q."/>
            <person name="Varga J."/>
            <person name="Awad M.M."/>
            <person name="Brinkac L.M."/>
            <person name="Daugherty S.C."/>
            <person name="Haft D.H."/>
            <person name="Dodson R.J."/>
            <person name="Madupu R."/>
            <person name="Nelson W.C."/>
            <person name="Rosovitz M.J."/>
            <person name="Sullivan S.A."/>
            <person name="Khouri H."/>
            <person name="Dimitrov G.I."/>
            <person name="Watkins K.L."/>
            <person name="Mulligan S."/>
            <person name="Benton J."/>
            <person name="Radune D."/>
            <person name="Fisher D.J."/>
            <person name="Atkins H.S."/>
            <person name="Hiscox T."/>
            <person name="Jost B.H."/>
            <person name="Billington S.J."/>
            <person name="Songer J.G."/>
            <person name="McClane B.A."/>
            <person name="Titball R.W."/>
            <person name="Rood J.I."/>
            <person name="Melville S.B."/>
            <person name="Paulsen I.T."/>
        </authorList>
    </citation>
    <scope>NUCLEOTIDE SEQUENCE [LARGE SCALE GENOMIC DNA]</scope>
    <source>
        <strain>ATCC 13124 / DSM 756 / JCM 1290 / NCIMB 6125 / NCTC 8237 / S 107 / Type A</strain>
    </source>
</reference>